<accession>Q1MIB8</accession>
<keyword id="KW-0687">Ribonucleoprotein</keyword>
<keyword id="KW-0689">Ribosomal protein</keyword>
<keyword id="KW-0694">RNA-binding</keyword>
<keyword id="KW-0699">rRNA-binding</keyword>
<name>RS11_RHIJ3</name>
<gene>
    <name evidence="1" type="primary">rpsK</name>
    <name type="ordered locus">RL1797</name>
</gene>
<reference key="1">
    <citation type="journal article" date="2006" name="Genome Biol.">
        <title>The genome of Rhizobium leguminosarum has recognizable core and accessory components.</title>
        <authorList>
            <person name="Young J.P.W."/>
            <person name="Crossman L.C."/>
            <person name="Johnston A.W.B."/>
            <person name="Thomson N.R."/>
            <person name="Ghazoui Z.F."/>
            <person name="Hull K.H."/>
            <person name="Wexler M."/>
            <person name="Curson A.R.J."/>
            <person name="Todd J.D."/>
            <person name="Poole P.S."/>
            <person name="Mauchline T.H."/>
            <person name="East A.K."/>
            <person name="Quail M.A."/>
            <person name="Churcher C."/>
            <person name="Arrowsmith C."/>
            <person name="Cherevach I."/>
            <person name="Chillingworth T."/>
            <person name="Clarke K."/>
            <person name="Cronin A."/>
            <person name="Davis P."/>
            <person name="Fraser A."/>
            <person name="Hance Z."/>
            <person name="Hauser H."/>
            <person name="Jagels K."/>
            <person name="Moule S."/>
            <person name="Mungall K."/>
            <person name="Norbertczak H."/>
            <person name="Rabbinowitsch E."/>
            <person name="Sanders M."/>
            <person name="Simmonds M."/>
            <person name="Whitehead S."/>
            <person name="Parkhill J."/>
        </authorList>
    </citation>
    <scope>NUCLEOTIDE SEQUENCE [LARGE SCALE GENOMIC DNA]</scope>
    <source>
        <strain>DSM 114642 / LMG 32736 / 3841</strain>
    </source>
</reference>
<protein>
    <recommendedName>
        <fullName evidence="1">Small ribosomal subunit protein uS11</fullName>
    </recommendedName>
    <alternativeName>
        <fullName evidence="2">30S ribosomal protein S11</fullName>
    </alternativeName>
</protein>
<dbReference type="EMBL" id="AM236080">
    <property type="protein sequence ID" value="CAK07292.1"/>
    <property type="molecule type" value="Genomic_DNA"/>
</dbReference>
<dbReference type="RefSeq" id="WP_003547577.1">
    <property type="nucleotide sequence ID" value="NC_008380.1"/>
</dbReference>
<dbReference type="SMR" id="Q1MIB8"/>
<dbReference type="EnsemblBacteria" id="CAK07292">
    <property type="protein sequence ID" value="CAK07292"/>
    <property type="gene ID" value="RL1797"/>
</dbReference>
<dbReference type="GeneID" id="91148151"/>
<dbReference type="KEGG" id="rle:RL1797"/>
<dbReference type="eggNOG" id="COG0100">
    <property type="taxonomic scope" value="Bacteria"/>
</dbReference>
<dbReference type="HOGENOM" id="CLU_072439_5_0_5"/>
<dbReference type="Proteomes" id="UP000006575">
    <property type="component" value="Chromosome"/>
</dbReference>
<dbReference type="GO" id="GO:1990904">
    <property type="term" value="C:ribonucleoprotein complex"/>
    <property type="evidence" value="ECO:0007669"/>
    <property type="project" value="UniProtKB-KW"/>
</dbReference>
<dbReference type="GO" id="GO:0005840">
    <property type="term" value="C:ribosome"/>
    <property type="evidence" value="ECO:0007669"/>
    <property type="project" value="UniProtKB-KW"/>
</dbReference>
<dbReference type="GO" id="GO:0019843">
    <property type="term" value="F:rRNA binding"/>
    <property type="evidence" value="ECO:0007669"/>
    <property type="project" value="UniProtKB-UniRule"/>
</dbReference>
<dbReference type="GO" id="GO:0003735">
    <property type="term" value="F:structural constituent of ribosome"/>
    <property type="evidence" value="ECO:0007669"/>
    <property type="project" value="InterPro"/>
</dbReference>
<dbReference type="GO" id="GO:0006412">
    <property type="term" value="P:translation"/>
    <property type="evidence" value="ECO:0007669"/>
    <property type="project" value="UniProtKB-UniRule"/>
</dbReference>
<dbReference type="FunFam" id="3.30.420.80:FF:000001">
    <property type="entry name" value="30S ribosomal protein S11"/>
    <property type="match status" value="1"/>
</dbReference>
<dbReference type="Gene3D" id="3.30.420.80">
    <property type="entry name" value="Ribosomal protein S11"/>
    <property type="match status" value="1"/>
</dbReference>
<dbReference type="HAMAP" id="MF_01310">
    <property type="entry name" value="Ribosomal_uS11"/>
    <property type="match status" value="1"/>
</dbReference>
<dbReference type="InterPro" id="IPR001971">
    <property type="entry name" value="Ribosomal_uS11"/>
</dbReference>
<dbReference type="InterPro" id="IPR019981">
    <property type="entry name" value="Ribosomal_uS11_bac-type"/>
</dbReference>
<dbReference type="InterPro" id="IPR018102">
    <property type="entry name" value="Ribosomal_uS11_CS"/>
</dbReference>
<dbReference type="InterPro" id="IPR036967">
    <property type="entry name" value="Ribosomal_uS11_sf"/>
</dbReference>
<dbReference type="NCBIfam" id="NF003698">
    <property type="entry name" value="PRK05309.1"/>
    <property type="match status" value="1"/>
</dbReference>
<dbReference type="NCBIfam" id="TIGR03632">
    <property type="entry name" value="uS11_bact"/>
    <property type="match status" value="1"/>
</dbReference>
<dbReference type="PANTHER" id="PTHR11759">
    <property type="entry name" value="40S RIBOSOMAL PROTEIN S14/30S RIBOSOMAL PROTEIN S11"/>
    <property type="match status" value="1"/>
</dbReference>
<dbReference type="Pfam" id="PF00411">
    <property type="entry name" value="Ribosomal_S11"/>
    <property type="match status" value="1"/>
</dbReference>
<dbReference type="PIRSF" id="PIRSF002131">
    <property type="entry name" value="Ribosomal_S11"/>
    <property type="match status" value="1"/>
</dbReference>
<dbReference type="SUPFAM" id="SSF53137">
    <property type="entry name" value="Translational machinery components"/>
    <property type="match status" value="1"/>
</dbReference>
<dbReference type="PROSITE" id="PS00054">
    <property type="entry name" value="RIBOSOMAL_S11"/>
    <property type="match status" value="1"/>
</dbReference>
<sequence>MAKEAVRVRRRERKNISSGVAHVNSTFNNTMITITDAQGNAIAWSSAGAKGFKGSRKSTPFAAQIAAEDCAKKAQEHGMKSLEVEVCGPGSGRESALRALQAAGFMITSIRDVTPIPHNGCRPRKKRRV</sequence>
<organism>
    <name type="scientific">Rhizobium johnstonii (strain DSM 114642 / LMG 32736 / 3841)</name>
    <name type="common">Rhizobium leguminosarum bv. viciae</name>
    <dbReference type="NCBI Taxonomy" id="216596"/>
    <lineage>
        <taxon>Bacteria</taxon>
        <taxon>Pseudomonadati</taxon>
        <taxon>Pseudomonadota</taxon>
        <taxon>Alphaproteobacteria</taxon>
        <taxon>Hyphomicrobiales</taxon>
        <taxon>Rhizobiaceae</taxon>
        <taxon>Rhizobium/Agrobacterium group</taxon>
        <taxon>Rhizobium</taxon>
        <taxon>Rhizobium johnstonii</taxon>
    </lineage>
</organism>
<comment type="function">
    <text evidence="1">Located on the platform of the 30S subunit, it bridges several disparate RNA helices of the 16S rRNA. Forms part of the Shine-Dalgarno cleft in the 70S ribosome.</text>
</comment>
<comment type="subunit">
    <text evidence="1">Part of the 30S ribosomal subunit. Interacts with proteins S7 and S18. Binds to IF-3.</text>
</comment>
<comment type="similarity">
    <text evidence="1">Belongs to the universal ribosomal protein uS11 family.</text>
</comment>
<evidence type="ECO:0000255" key="1">
    <source>
        <dbReference type="HAMAP-Rule" id="MF_01310"/>
    </source>
</evidence>
<evidence type="ECO:0000305" key="2"/>
<feature type="chain" id="PRO_0000294834" description="Small ribosomal subunit protein uS11">
    <location>
        <begin position="1"/>
        <end position="129"/>
    </location>
</feature>
<proteinExistence type="inferred from homology"/>